<gene>
    <name evidence="1" type="primary">speA</name>
    <name type="ordered locus">YPO0929</name>
    <name type="ordered locus">y3313</name>
    <name type="ordered locus">YP_3513</name>
</gene>
<evidence type="ECO:0000255" key="1">
    <source>
        <dbReference type="HAMAP-Rule" id="MF_01417"/>
    </source>
</evidence>
<reference key="1">
    <citation type="journal article" date="2001" name="Nature">
        <title>Genome sequence of Yersinia pestis, the causative agent of plague.</title>
        <authorList>
            <person name="Parkhill J."/>
            <person name="Wren B.W."/>
            <person name="Thomson N.R."/>
            <person name="Titball R.W."/>
            <person name="Holden M.T.G."/>
            <person name="Prentice M.B."/>
            <person name="Sebaihia M."/>
            <person name="James K.D."/>
            <person name="Churcher C.M."/>
            <person name="Mungall K.L."/>
            <person name="Baker S."/>
            <person name="Basham D."/>
            <person name="Bentley S.D."/>
            <person name="Brooks K."/>
            <person name="Cerdeno-Tarraga A.-M."/>
            <person name="Chillingworth T."/>
            <person name="Cronin A."/>
            <person name="Davies R.M."/>
            <person name="Davis P."/>
            <person name="Dougan G."/>
            <person name="Feltwell T."/>
            <person name="Hamlin N."/>
            <person name="Holroyd S."/>
            <person name="Jagels K."/>
            <person name="Karlyshev A.V."/>
            <person name="Leather S."/>
            <person name="Moule S."/>
            <person name="Oyston P.C.F."/>
            <person name="Quail M.A."/>
            <person name="Rutherford K.M."/>
            <person name="Simmonds M."/>
            <person name="Skelton J."/>
            <person name="Stevens K."/>
            <person name="Whitehead S."/>
            <person name="Barrell B.G."/>
        </authorList>
    </citation>
    <scope>NUCLEOTIDE SEQUENCE [LARGE SCALE GENOMIC DNA]</scope>
    <source>
        <strain>CO-92 / Biovar Orientalis</strain>
    </source>
</reference>
<reference key="2">
    <citation type="journal article" date="2002" name="J. Bacteriol.">
        <title>Genome sequence of Yersinia pestis KIM.</title>
        <authorList>
            <person name="Deng W."/>
            <person name="Burland V."/>
            <person name="Plunkett G. III"/>
            <person name="Boutin A."/>
            <person name="Mayhew G.F."/>
            <person name="Liss P."/>
            <person name="Perna N.T."/>
            <person name="Rose D.J."/>
            <person name="Mau B."/>
            <person name="Zhou S."/>
            <person name="Schwartz D.C."/>
            <person name="Fetherston J.D."/>
            <person name="Lindler L.E."/>
            <person name="Brubaker R.R."/>
            <person name="Plano G.V."/>
            <person name="Straley S.C."/>
            <person name="McDonough K.A."/>
            <person name="Nilles M.L."/>
            <person name="Matson J.S."/>
            <person name="Blattner F.R."/>
            <person name="Perry R.D."/>
        </authorList>
    </citation>
    <scope>NUCLEOTIDE SEQUENCE [LARGE SCALE GENOMIC DNA]</scope>
    <source>
        <strain>KIM10+ / Biovar Mediaevalis</strain>
    </source>
</reference>
<reference key="3">
    <citation type="journal article" date="2004" name="DNA Res.">
        <title>Complete genome sequence of Yersinia pestis strain 91001, an isolate avirulent to humans.</title>
        <authorList>
            <person name="Song Y."/>
            <person name="Tong Z."/>
            <person name="Wang J."/>
            <person name="Wang L."/>
            <person name="Guo Z."/>
            <person name="Han Y."/>
            <person name="Zhang J."/>
            <person name="Pei D."/>
            <person name="Zhou D."/>
            <person name="Qin H."/>
            <person name="Pang X."/>
            <person name="Han Y."/>
            <person name="Zhai J."/>
            <person name="Li M."/>
            <person name="Cui B."/>
            <person name="Qi Z."/>
            <person name="Jin L."/>
            <person name="Dai R."/>
            <person name="Chen F."/>
            <person name="Li S."/>
            <person name="Ye C."/>
            <person name="Du Z."/>
            <person name="Lin W."/>
            <person name="Wang J."/>
            <person name="Yu J."/>
            <person name="Yang H."/>
            <person name="Wang J."/>
            <person name="Huang P."/>
            <person name="Yang R."/>
        </authorList>
    </citation>
    <scope>NUCLEOTIDE SEQUENCE [LARGE SCALE GENOMIC DNA]</scope>
    <source>
        <strain>91001 / Biovar Mediaevalis</strain>
    </source>
</reference>
<proteinExistence type="inferred from homology"/>
<comment type="function">
    <text evidence="1">Catalyzes the biosynthesis of agmatine from arginine.</text>
</comment>
<comment type="catalytic activity">
    <reaction evidence="1">
        <text>L-arginine + H(+) = agmatine + CO2</text>
        <dbReference type="Rhea" id="RHEA:17641"/>
        <dbReference type="ChEBI" id="CHEBI:15378"/>
        <dbReference type="ChEBI" id="CHEBI:16526"/>
        <dbReference type="ChEBI" id="CHEBI:32682"/>
        <dbReference type="ChEBI" id="CHEBI:58145"/>
        <dbReference type="EC" id="4.1.1.19"/>
    </reaction>
</comment>
<comment type="cofactor">
    <cofactor evidence="1">
        <name>Mg(2+)</name>
        <dbReference type="ChEBI" id="CHEBI:18420"/>
    </cofactor>
</comment>
<comment type="cofactor">
    <cofactor evidence="1">
        <name>pyridoxal 5'-phosphate</name>
        <dbReference type="ChEBI" id="CHEBI:597326"/>
    </cofactor>
</comment>
<comment type="pathway">
    <text evidence="1">Amine and polyamine biosynthesis; agmatine biosynthesis; agmatine from L-arginine: step 1/1.</text>
</comment>
<comment type="similarity">
    <text evidence="1">Belongs to the Orn/Lys/Arg decarboxylase class-II family. SpeA subfamily.</text>
</comment>
<protein>
    <recommendedName>
        <fullName evidence="1">Biosynthetic arginine decarboxylase</fullName>
        <shortName evidence="1">ADC</shortName>
        <ecNumber evidence="1">4.1.1.19</ecNumber>
    </recommendedName>
</protein>
<organism>
    <name type="scientific">Yersinia pestis</name>
    <dbReference type="NCBI Taxonomy" id="632"/>
    <lineage>
        <taxon>Bacteria</taxon>
        <taxon>Pseudomonadati</taxon>
        <taxon>Pseudomonadota</taxon>
        <taxon>Gammaproteobacteria</taxon>
        <taxon>Enterobacterales</taxon>
        <taxon>Yersiniaceae</taxon>
        <taxon>Yersinia</taxon>
    </lineage>
</organism>
<keyword id="KW-0210">Decarboxylase</keyword>
<keyword id="KW-0456">Lyase</keyword>
<keyword id="KW-0460">Magnesium</keyword>
<keyword id="KW-0479">Metal-binding</keyword>
<keyword id="KW-0620">Polyamine biosynthesis</keyword>
<keyword id="KW-0661">Putrescine biosynthesis</keyword>
<keyword id="KW-0663">Pyridoxal phosphate</keyword>
<keyword id="KW-1185">Reference proteome</keyword>
<keyword id="KW-0745">Spermidine biosynthesis</keyword>
<sequence length="659" mass="74104">MSDDNLISRPLTAGAHVSLRSMQEVAMNDRNASKMLSTYNVAYWGGNYYDVNELGHISVCPDPDIREARVDLAQLVKKMQLEQGQRLPALFCFPQILQHRLRSINAAFKRARESFGYEGGYFLVYPIKVNQHRRVIESLVNSGEPLGLEAGSKAEMMAVLAHAGMTRSVIVCNGYKDREYIRLALIGEKLGHKVYLVIEKMSEIKMVLEEAERLNVVPRLGVRARLASQGSGKWQASGGEKSKFGLSATQVLQLVDMLREANSLESLQLLHFHLGSQLSNIRDISTGVRESARFYVELHKLGVNIQCFDVGGGLGVDYEGTRSQSDCSVNYGLNEYANNVIWGIGDACNEHGLPHPTVITESGRAVTAHHTVLVSNVIGVERNEFCEPQPPEAGAPRALESLWDTWQEMQEPENRRSLREWLHDSQMDLHDVHTQYAHGMLDLTHRAWAEQLYLSICNEIQKQLDPSNRAHRPIIDELQERMADKLYVNFSLFQSMPDAWGIDQLFPVLPLEGLDKPPERRAVLLDITCDSDGTIDHYIDGDGVATTMPMPPYDPENPPLLGFFMVGAYQEILGNMHNLFGDTAAVDVYVFPDGTVEVEQTDEGDTVADMLEYVQLNPEKLLEHFRGQVKETDLDTELQAQFLEEFEAGLYGYTYLEDE</sequence>
<feature type="chain" id="PRO_0000149991" description="Biosynthetic arginine decarboxylase">
    <location>
        <begin position="1"/>
        <end position="659"/>
    </location>
</feature>
<feature type="binding site" evidence="1">
    <location>
        <begin position="308"/>
        <end position="318"/>
    </location>
    <ligand>
        <name>substrate</name>
    </ligand>
</feature>
<feature type="modified residue" description="N6-(pyridoxal phosphate)lysine" evidence="1">
    <location>
        <position position="128"/>
    </location>
</feature>
<accession>Q8ZHG8</accession>
<accession>Q0WIB1</accession>
<dbReference type="EC" id="4.1.1.19" evidence="1"/>
<dbReference type="EMBL" id="AL590842">
    <property type="protein sequence ID" value="CAL19596.1"/>
    <property type="molecule type" value="Genomic_DNA"/>
</dbReference>
<dbReference type="EMBL" id="AE009952">
    <property type="protein sequence ID" value="AAM86863.1"/>
    <property type="molecule type" value="Genomic_DNA"/>
</dbReference>
<dbReference type="EMBL" id="AE017042">
    <property type="protein sequence ID" value="AAS63667.1"/>
    <property type="molecule type" value="Genomic_DNA"/>
</dbReference>
<dbReference type="PIR" id="AB0114">
    <property type="entry name" value="AB0114"/>
</dbReference>
<dbReference type="RefSeq" id="WP_002209969.1">
    <property type="nucleotide sequence ID" value="NZ_WUCM01000030.1"/>
</dbReference>
<dbReference type="RefSeq" id="YP_002345977.1">
    <property type="nucleotide sequence ID" value="NC_003143.1"/>
</dbReference>
<dbReference type="SMR" id="Q8ZHG8"/>
<dbReference type="IntAct" id="Q8ZHG8">
    <property type="interactions" value="7"/>
</dbReference>
<dbReference type="STRING" id="214092.YPO0929"/>
<dbReference type="PaxDb" id="214092-YPO0929"/>
<dbReference type="DNASU" id="1148260"/>
<dbReference type="EnsemblBacteria" id="AAS63667">
    <property type="protein sequence ID" value="AAS63667"/>
    <property type="gene ID" value="YP_3513"/>
</dbReference>
<dbReference type="GeneID" id="57973711"/>
<dbReference type="KEGG" id="ype:YPO0929"/>
<dbReference type="KEGG" id="ypk:y3313"/>
<dbReference type="KEGG" id="ypm:YP_3513"/>
<dbReference type="PATRIC" id="fig|214092.21.peg.1206"/>
<dbReference type="eggNOG" id="COG1166">
    <property type="taxonomic scope" value="Bacteria"/>
</dbReference>
<dbReference type="HOGENOM" id="CLU_027243_1_0_6"/>
<dbReference type="OMA" id="AVEYTQH"/>
<dbReference type="OrthoDB" id="9802658at2"/>
<dbReference type="BRENDA" id="4.1.1.19">
    <property type="organism ID" value="4559"/>
</dbReference>
<dbReference type="UniPathway" id="UPA00186">
    <property type="reaction ID" value="UER00284"/>
</dbReference>
<dbReference type="Proteomes" id="UP000000815">
    <property type="component" value="Chromosome"/>
</dbReference>
<dbReference type="Proteomes" id="UP000001019">
    <property type="component" value="Chromosome"/>
</dbReference>
<dbReference type="Proteomes" id="UP000002490">
    <property type="component" value="Chromosome"/>
</dbReference>
<dbReference type="GO" id="GO:0008792">
    <property type="term" value="F:arginine decarboxylase activity"/>
    <property type="evidence" value="ECO:0000318"/>
    <property type="project" value="GO_Central"/>
</dbReference>
<dbReference type="GO" id="GO:0046872">
    <property type="term" value="F:metal ion binding"/>
    <property type="evidence" value="ECO:0007669"/>
    <property type="project" value="UniProtKB-KW"/>
</dbReference>
<dbReference type="GO" id="GO:0006527">
    <property type="term" value="P:arginine catabolic process"/>
    <property type="evidence" value="ECO:0007669"/>
    <property type="project" value="InterPro"/>
</dbReference>
<dbReference type="GO" id="GO:0033388">
    <property type="term" value="P:putrescine biosynthetic process from arginine"/>
    <property type="evidence" value="ECO:0000318"/>
    <property type="project" value="GO_Central"/>
</dbReference>
<dbReference type="GO" id="GO:0008295">
    <property type="term" value="P:spermidine biosynthetic process"/>
    <property type="evidence" value="ECO:0007669"/>
    <property type="project" value="UniProtKB-UniRule"/>
</dbReference>
<dbReference type="CDD" id="cd06830">
    <property type="entry name" value="PLPDE_III_ADC"/>
    <property type="match status" value="1"/>
</dbReference>
<dbReference type="FunFam" id="1.10.287.3440:FF:000001">
    <property type="entry name" value="Biosynthetic arginine decarboxylase"/>
    <property type="match status" value="1"/>
</dbReference>
<dbReference type="FunFam" id="1.20.58.930:FF:000001">
    <property type="entry name" value="Biosynthetic arginine decarboxylase"/>
    <property type="match status" value="1"/>
</dbReference>
<dbReference type="FunFam" id="2.40.37.10:FF:000001">
    <property type="entry name" value="Biosynthetic arginine decarboxylase"/>
    <property type="match status" value="1"/>
</dbReference>
<dbReference type="FunFam" id="3.20.20.10:FF:000001">
    <property type="entry name" value="Biosynthetic arginine decarboxylase"/>
    <property type="match status" value="1"/>
</dbReference>
<dbReference type="Gene3D" id="1.10.287.3440">
    <property type="match status" value="1"/>
</dbReference>
<dbReference type="Gene3D" id="1.20.58.930">
    <property type="match status" value="1"/>
</dbReference>
<dbReference type="Gene3D" id="3.20.20.10">
    <property type="entry name" value="Alanine racemase"/>
    <property type="match status" value="1"/>
</dbReference>
<dbReference type="Gene3D" id="2.40.37.10">
    <property type="entry name" value="Lyase, Ornithine Decarboxylase, Chain A, domain 1"/>
    <property type="match status" value="1"/>
</dbReference>
<dbReference type="HAMAP" id="MF_01417">
    <property type="entry name" value="SpeA"/>
    <property type="match status" value="1"/>
</dbReference>
<dbReference type="InterPro" id="IPR009006">
    <property type="entry name" value="Ala_racemase/Decarboxylase_C"/>
</dbReference>
<dbReference type="InterPro" id="IPR040634">
    <property type="entry name" value="Arg_decarb_HB"/>
</dbReference>
<dbReference type="InterPro" id="IPR041128">
    <property type="entry name" value="Arg_decarbox_C"/>
</dbReference>
<dbReference type="InterPro" id="IPR002985">
    <property type="entry name" value="Arg_decrbxlase"/>
</dbReference>
<dbReference type="InterPro" id="IPR022657">
    <property type="entry name" value="De-COase2_CS"/>
</dbReference>
<dbReference type="InterPro" id="IPR022644">
    <property type="entry name" value="De-COase2_N"/>
</dbReference>
<dbReference type="InterPro" id="IPR022653">
    <property type="entry name" value="De-COase2_pyr-phos_BS"/>
</dbReference>
<dbReference type="InterPro" id="IPR000183">
    <property type="entry name" value="Orn/DAP/Arg_de-COase"/>
</dbReference>
<dbReference type="InterPro" id="IPR029066">
    <property type="entry name" value="PLP-binding_barrel"/>
</dbReference>
<dbReference type="NCBIfam" id="NF003763">
    <property type="entry name" value="PRK05354.1"/>
    <property type="match status" value="1"/>
</dbReference>
<dbReference type="NCBIfam" id="TIGR01273">
    <property type="entry name" value="speA"/>
    <property type="match status" value="1"/>
</dbReference>
<dbReference type="PANTHER" id="PTHR43295">
    <property type="entry name" value="ARGININE DECARBOXYLASE"/>
    <property type="match status" value="1"/>
</dbReference>
<dbReference type="PANTHER" id="PTHR43295:SF9">
    <property type="entry name" value="BIOSYNTHETIC ARGININE DECARBOXYLASE"/>
    <property type="match status" value="1"/>
</dbReference>
<dbReference type="Pfam" id="PF17810">
    <property type="entry name" value="Arg_decarb_HB"/>
    <property type="match status" value="1"/>
</dbReference>
<dbReference type="Pfam" id="PF17944">
    <property type="entry name" value="Arg_decarbox_C"/>
    <property type="match status" value="1"/>
</dbReference>
<dbReference type="Pfam" id="PF02784">
    <property type="entry name" value="Orn_Arg_deC_N"/>
    <property type="match status" value="1"/>
</dbReference>
<dbReference type="PIRSF" id="PIRSF001336">
    <property type="entry name" value="Arg_decrbxlase"/>
    <property type="match status" value="1"/>
</dbReference>
<dbReference type="PRINTS" id="PR01180">
    <property type="entry name" value="ARGDCRBXLASE"/>
</dbReference>
<dbReference type="PRINTS" id="PR01179">
    <property type="entry name" value="ODADCRBXLASE"/>
</dbReference>
<dbReference type="SUPFAM" id="SSF50621">
    <property type="entry name" value="Alanine racemase C-terminal domain-like"/>
    <property type="match status" value="1"/>
</dbReference>
<dbReference type="SUPFAM" id="SSF51419">
    <property type="entry name" value="PLP-binding barrel"/>
    <property type="match status" value="1"/>
</dbReference>
<dbReference type="PROSITE" id="PS00878">
    <property type="entry name" value="ODR_DC_2_1"/>
    <property type="match status" value="1"/>
</dbReference>
<dbReference type="PROSITE" id="PS00879">
    <property type="entry name" value="ODR_DC_2_2"/>
    <property type="match status" value="1"/>
</dbReference>
<name>SPEA_YERPE</name>